<sequence>MSDESGRRNLRMPNDDEVFAVVKRHDGGNHVTLQCEDGKERMGRIPGRMKYRTWINEGDVVLAEPWDWQDEKANVEWRYSDQDADQLREEGHIE</sequence>
<accession>Q9HP87</accession>
<name>IF1A2_HALSA</name>
<protein>
    <recommendedName>
        <fullName>Translation initiation factor 1A 2</fullName>
        <shortName>aIF-1A 2</shortName>
    </recommendedName>
</protein>
<reference key="1">
    <citation type="journal article" date="2000" name="Proc. Natl. Acad. Sci. U.S.A.">
        <title>Genome sequence of Halobacterium species NRC-1.</title>
        <authorList>
            <person name="Ng W.V."/>
            <person name="Kennedy S.P."/>
            <person name="Mahairas G.G."/>
            <person name="Berquist B."/>
            <person name="Pan M."/>
            <person name="Shukla H.D."/>
            <person name="Lasky S.R."/>
            <person name="Baliga N.S."/>
            <person name="Thorsson V."/>
            <person name="Sbrogna J."/>
            <person name="Swartzell S."/>
            <person name="Weir D."/>
            <person name="Hall J."/>
            <person name="Dahl T.A."/>
            <person name="Welti R."/>
            <person name="Goo Y.A."/>
            <person name="Leithauser B."/>
            <person name="Keller K."/>
            <person name="Cruz R."/>
            <person name="Danson M.J."/>
            <person name="Hough D.W."/>
            <person name="Maddocks D.G."/>
            <person name="Jablonski P.E."/>
            <person name="Krebs M.P."/>
            <person name="Angevine C.M."/>
            <person name="Dale H."/>
            <person name="Isenbarger T.A."/>
            <person name="Peck R.F."/>
            <person name="Pohlschroder M."/>
            <person name="Spudich J.L."/>
            <person name="Jung K.-H."/>
            <person name="Alam M."/>
            <person name="Freitas T."/>
            <person name="Hou S."/>
            <person name="Daniels C.J."/>
            <person name="Dennis P.P."/>
            <person name="Omer A.D."/>
            <person name="Ebhardt H."/>
            <person name="Lowe T.M."/>
            <person name="Liang P."/>
            <person name="Riley M."/>
            <person name="Hood L."/>
            <person name="DasSarma S."/>
        </authorList>
    </citation>
    <scope>NUCLEOTIDE SEQUENCE [LARGE SCALE GENOMIC DNA]</scope>
    <source>
        <strain>ATCC 700922 / JCM 11081 / NRC-1</strain>
    </source>
</reference>
<keyword id="KW-0396">Initiation factor</keyword>
<keyword id="KW-0648">Protein biosynthesis</keyword>
<keyword id="KW-1185">Reference proteome</keyword>
<proteinExistence type="inferred from homology"/>
<dbReference type="EMBL" id="AE004437">
    <property type="protein sequence ID" value="AAG19983.1"/>
    <property type="molecule type" value="Genomic_DNA"/>
</dbReference>
<dbReference type="PIR" id="C84327">
    <property type="entry name" value="C84327"/>
</dbReference>
<dbReference type="RefSeq" id="WP_049892515.1">
    <property type="nucleotide sequence ID" value="NC_002607.1"/>
</dbReference>
<dbReference type="SMR" id="Q9HP87"/>
<dbReference type="FunCoup" id="Q9HP87">
    <property type="interactions" value="110"/>
</dbReference>
<dbReference type="STRING" id="64091.VNG_1756G"/>
<dbReference type="PaxDb" id="64091-VNG_1756G"/>
<dbReference type="KEGG" id="hal:VNG_1756G"/>
<dbReference type="PATRIC" id="fig|64091.14.peg.1338"/>
<dbReference type="HOGENOM" id="CLU_109098_1_2_2"/>
<dbReference type="InParanoid" id="Q9HP87"/>
<dbReference type="OrthoDB" id="2586at2157"/>
<dbReference type="Proteomes" id="UP000000554">
    <property type="component" value="Chromosome"/>
</dbReference>
<dbReference type="GO" id="GO:0005737">
    <property type="term" value="C:cytoplasm"/>
    <property type="evidence" value="ECO:0000318"/>
    <property type="project" value="GO_Central"/>
</dbReference>
<dbReference type="GO" id="GO:0003723">
    <property type="term" value="F:RNA binding"/>
    <property type="evidence" value="ECO:0007669"/>
    <property type="project" value="InterPro"/>
</dbReference>
<dbReference type="GO" id="GO:0003743">
    <property type="term" value="F:translation initiation factor activity"/>
    <property type="evidence" value="ECO:0000318"/>
    <property type="project" value="GO_Central"/>
</dbReference>
<dbReference type="GO" id="GO:0006413">
    <property type="term" value="P:translational initiation"/>
    <property type="evidence" value="ECO:0000318"/>
    <property type="project" value="GO_Central"/>
</dbReference>
<dbReference type="CDD" id="cd05793">
    <property type="entry name" value="S1_IF1A"/>
    <property type="match status" value="1"/>
</dbReference>
<dbReference type="Gene3D" id="2.40.50.140">
    <property type="entry name" value="Nucleic acid-binding proteins"/>
    <property type="match status" value="1"/>
</dbReference>
<dbReference type="HAMAP" id="MF_00216">
    <property type="entry name" value="aIF_1A"/>
    <property type="match status" value="1"/>
</dbReference>
<dbReference type="InterPro" id="IPR012340">
    <property type="entry name" value="NA-bd_OB-fold"/>
</dbReference>
<dbReference type="InterPro" id="IPR006196">
    <property type="entry name" value="RNA-binding_domain_S1_IF1"/>
</dbReference>
<dbReference type="InterPro" id="IPR001253">
    <property type="entry name" value="TIF_eIF-1A"/>
</dbReference>
<dbReference type="InterPro" id="IPR018104">
    <property type="entry name" value="TIF_eIF-1A_CS"/>
</dbReference>
<dbReference type="NCBIfam" id="NF003083">
    <property type="entry name" value="PRK04012.1-2"/>
    <property type="match status" value="1"/>
</dbReference>
<dbReference type="NCBIfam" id="NF003084">
    <property type="entry name" value="PRK04012.1-3"/>
    <property type="match status" value="1"/>
</dbReference>
<dbReference type="NCBIfam" id="NF003085">
    <property type="entry name" value="PRK04012.1-5"/>
    <property type="match status" value="1"/>
</dbReference>
<dbReference type="PANTHER" id="PTHR21668">
    <property type="entry name" value="EIF-1A"/>
    <property type="match status" value="1"/>
</dbReference>
<dbReference type="Pfam" id="PF01176">
    <property type="entry name" value="eIF-1a"/>
    <property type="match status" value="1"/>
</dbReference>
<dbReference type="SMART" id="SM00652">
    <property type="entry name" value="eIF1a"/>
    <property type="match status" value="1"/>
</dbReference>
<dbReference type="SUPFAM" id="SSF50249">
    <property type="entry name" value="Nucleic acid-binding proteins"/>
    <property type="match status" value="1"/>
</dbReference>
<dbReference type="PROSITE" id="PS01262">
    <property type="entry name" value="IF1A"/>
    <property type="match status" value="1"/>
</dbReference>
<dbReference type="PROSITE" id="PS50832">
    <property type="entry name" value="S1_IF1_TYPE"/>
    <property type="match status" value="1"/>
</dbReference>
<organism>
    <name type="scientific">Halobacterium salinarum (strain ATCC 700922 / JCM 11081 / NRC-1)</name>
    <name type="common">Halobacterium halobium</name>
    <dbReference type="NCBI Taxonomy" id="64091"/>
    <lineage>
        <taxon>Archaea</taxon>
        <taxon>Methanobacteriati</taxon>
        <taxon>Methanobacteriota</taxon>
        <taxon>Stenosarchaea group</taxon>
        <taxon>Halobacteria</taxon>
        <taxon>Halobacteriales</taxon>
        <taxon>Halobacteriaceae</taxon>
        <taxon>Halobacterium</taxon>
        <taxon>Halobacterium salinarum NRC-34001</taxon>
    </lineage>
</organism>
<evidence type="ECO:0000250" key="1"/>
<evidence type="ECO:0000305" key="2"/>
<gene>
    <name type="primary">eIF1A2</name>
    <name type="ordered locus">VNG_1756G</name>
</gene>
<comment type="function">
    <text evidence="1">Seems to be required for maximal rate of protein biosynthesis. Enhances ribosome dissociation into subunits and stabilizes the binding of the initiator Met-tRNA(I) to 40 S ribosomal subunits (By similarity).</text>
</comment>
<comment type="similarity">
    <text evidence="2">Belongs to the eIF-1A family.</text>
</comment>
<feature type="chain" id="PRO_0000145117" description="Translation initiation factor 1A 2">
    <location>
        <begin position="1"/>
        <end position="94"/>
    </location>
</feature>
<feature type="domain" description="S1-like">
    <location>
        <begin position="6"/>
        <end position="80"/>
    </location>
</feature>